<gene>
    <name evidence="1" type="primary">pgk</name>
    <name type="ordered locus">Mrad2831_0158</name>
</gene>
<comment type="catalytic activity">
    <reaction evidence="1">
        <text>(2R)-3-phosphoglycerate + ATP = (2R)-3-phospho-glyceroyl phosphate + ADP</text>
        <dbReference type="Rhea" id="RHEA:14801"/>
        <dbReference type="ChEBI" id="CHEBI:30616"/>
        <dbReference type="ChEBI" id="CHEBI:57604"/>
        <dbReference type="ChEBI" id="CHEBI:58272"/>
        <dbReference type="ChEBI" id="CHEBI:456216"/>
        <dbReference type="EC" id="2.7.2.3"/>
    </reaction>
</comment>
<comment type="pathway">
    <text evidence="1">Carbohydrate degradation; glycolysis; pyruvate from D-glyceraldehyde 3-phosphate: step 2/5.</text>
</comment>
<comment type="subunit">
    <text evidence="1">Monomer.</text>
</comment>
<comment type="subcellular location">
    <subcellularLocation>
        <location evidence="1">Cytoplasm</location>
    </subcellularLocation>
</comment>
<comment type="similarity">
    <text evidence="1">Belongs to the phosphoglycerate kinase family.</text>
</comment>
<accession>B1M787</accession>
<sequence>MSAFRTLDDAGSLKGKRVLMRVDLNVPMESGRVTDATRIERVAPTIREVAEQGAKVILLAHFGRPKGKREPKDSLEPVVPALGAALGRDVAFAADCVGDAAAQAVAALKDGDVLLLENTRYHAGEEKNDAAFADALAANGDVYVNEAFSAAHRAHASTEGLAHRLPAYAGREMQAELDALTKGLESPQRPVIALVGGAKVSSKIDLLENLVAKVDMLVIGGGMANTFLHAQGKAVGKSLCEKDLAETATRILAAAEKAGCRIILPVDAVAASEFKARAPHETVPVDAVPDASMILDAGPRSVAEINAAIDGAKTLVWNGPLGAFELAPFDAATVATAKHAAARTKDGQLVSVAGGGDTVAALNHAGVGQDFTYVSTAGGAFLEWLEGKALPGVEALRAKG</sequence>
<dbReference type="EC" id="2.7.2.3" evidence="1"/>
<dbReference type="EMBL" id="CP001001">
    <property type="protein sequence ID" value="ACB22185.1"/>
    <property type="molecule type" value="Genomic_DNA"/>
</dbReference>
<dbReference type="RefSeq" id="WP_012317183.1">
    <property type="nucleotide sequence ID" value="NC_010505.1"/>
</dbReference>
<dbReference type="SMR" id="B1M787"/>
<dbReference type="STRING" id="426355.Mrad2831_0158"/>
<dbReference type="GeneID" id="6136458"/>
<dbReference type="KEGG" id="mrd:Mrad2831_0158"/>
<dbReference type="PATRIC" id="fig|426355.14.peg.184"/>
<dbReference type="eggNOG" id="COG0126">
    <property type="taxonomic scope" value="Bacteria"/>
</dbReference>
<dbReference type="HOGENOM" id="CLU_025427_0_2_5"/>
<dbReference type="OrthoDB" id="9808460at2"/>
<dbReference type="UniPathway" id="UPA00109">
    <property type="reaction ID" value="UER00185"/>
</dbReference>
<dbReference type="Proteomes" id="UP000006589">
    <property type="component" value="Chromosome"/>
</dbReference>
<dbReference type="GO" id="GO:0005829">
    <property type="term" value="C:cytosol"/>
    <property type="evidence" value="ECO:0007669"/>
    <property type="project" value="TreeGrafter"/>
</dbReference>
<dbReference type="GO" id="GO:0043531">
    <property type="term" value="F:ADP binding"/>
    <property type="evidence" value="ECO:0007669"/>
    <property type="project" value="TreeGrafter"/>
</dbReference>
<dbReference type="GO" id="GO:0005524">
    <property type="term" value="F:ATP binding"/>
    <property type="evidence" value="ECO:0007669"/>
    <property type="project" value="UniProtKB-KW"/>
</dbReference>
<dbReference type="GO" id="GO:0004618">
    <property type="term" value="F:phosphoglycerate kinase activity"/>
    <property type="evidence" value="ECO:0007669"/>
    <property type="project" value="UniProtKB-UniRule"/>
</dbReference>
<dbReference type="GO" id="GO:0006094">
    <property type="term" value="P:gluconeogenesis"/>
    <property type="evidence" value="ECO:0007669"/>
    <property type="project" value="TreeGrafter"/>
</dbReference>
<dbReference type="GO" id="GO:0006096">
    <property type="term" value="P:glycolytic process"/>
    <property type="evidence" value="ECO:0007669"/>
    <property type="project" value="UniProtKB-UniRule"/>
</dbReference>
<dbReference type="FunFam" id="3.40.50.1260:FF:000001">
    <property type="entry name" value="Phosphoglycerate kinase"/>
    <property type="match status" value="1"/>
</dbReference>
<dbReference type="FunFam" id="3.40.50.1260:FF:000006">
    <property type="entry name" value="Phosphoglycerate kinase"/>
    <property type="match status" value="1"/>
</dbReference>
<dbReference type="Gene3D" id="3.40.50.1260">
    <property type="entry name" value="Phosphoglycerate kinase, N-terminal domain"/>
    <property type="match status" value="2"/>
</dbReference>
<dbReference type="HAMAP" id="MF_00145">
    <property type="entry name" value="Phosphoglyc_kinase"/>
    <property type="match status" value="1"/>
</dbReference>
<dbReference type="InterPro" id="IPR001576">
    <property type="entry name" value="Phosphoglycerate_kinase"/>
</dbReference>
<dbReference type="InterPro" id="IPR015911">
    <property type="entry name" value="Phosphoglycerate_kinase_CS"/>
</dbReference>
<dbReference type="InterPro" id="IPR015824">
    <property type="entry name" value="Phosphoglycerate_kinase_N"/>
</dbReference>
<dbReference type="InterPro" id="IPR036043">
    <property type="entry name" value="Phosphoglycerate_kinase_sf"/>
</dbReference>
<dbReference type="PANTHER" id="PTHR11406">
    <property type="entry name" value="PHOSPHOGLYCERATE KINASE"/>
    <property type="match status" value="1"/>
</dbReference>
<dbReference type="PANTHER" id="PTHR11406:SF23">
    <property type="entry name" value="PHOSPHOGLYCERATE KINASE 1, CHLOROPLASTIC-RELATED"/>
    <property type="match status" value="1"/>
</dbReference>
<dbReference type="Pfam" id="PF00162">
    <property type="entry name" value="PGK"/>
    <property type="match status" value="1"/>
</dbReference>
<dbReference type="PIRSF" id="PIRSF000724">
    <property type="entry name" value="Pgk"/>
    <property type="match status" value="1"/>
</dbReference>
<dbReference type="PRINTS" id="PR00477">
    <property type="entry name" value="PHGLYCKINASE"/>
</dbReference>
<dbReference type="SUPFAM" id="SSF53748">
    <property type="entry name" value="Phosphoglycerate kinase"/>
    <property type="match status" value="1"/>
</dbReference>
<dbReference type="PROSITE" id="PS00111">
    <property type="entry name" value="PGLYCERATE_KINASE"/>
    <property type="match status" value="1"/>
</dbReference>
<protein>
    <recommendedName>
        <fullName evidence="1">Phosphoglycerate kinase</fullName>
        <ecNumber evidence="1">2.7.2.3</ecNumber>
    </recommendedName>
</protein>
<name>PGK_METRJ</name>
<reference key="1">
    <citation type="submission" date="2008-03" db="EMBL/GenBank/DDBJ databases">
        <title>Complete sequence of chromosome of Methylobacterium radiotolerans JCM 2831.</title>
        <authorList>
            <consortium name="US DOE Joint Genome Institute"/>
            <person name="Copeland A."/>
            <person name="Lucas S."/>
            <person name="Lapidus A."/>
            <person name="Glavina del Rio T."/>
            <person name="Dalin E."/>
            <person name="Tice H."/>
            <person name="Bruce D."/>
            <person name="Goodwin L."/>
            <person name="Pitluck S."/>
            <person name="Kiss H."/>
            <person name="Brettin T."/>
            <person name="Detter J.C."/>
            <person name="Han C."/>
            <person name="Kuske C.R."/>
            <person name="Schmutz J."/>
            <person name="Larimer F."/>
            <person name="Land M."/>
            <person name="Hauser L."/>
            <person name="Kyrpides N."/>
            <person name="Mikhailova N."/>
            <person name="Marx C.J."/>
            <person name="Richardson P."/>
        </authorList>
    </citation>
    <scope>NUCLEOTIDE SEQUENCE [LARGE SCALE GENOMIC DNA]</scope>
    <source>
        <strain>ATCC 27329 / DSM 1819 / JCM 2831 / NBRC 15690 / NCIMB 10815 / 0-1</strain>
    </source>
</reference>
<keyword id="KW-0067">ATP-binding</keyword>
<keyword id="KW-0963">Cytoplasm</keyword>
<keyword id="KW-0324">Glycolysis</keyword>
<keyword id="KW-0418">Kinase</keyword>
<keyword id="KW-0547">Nucleotide-binding</keyword>
<keyword id="KW-0808">Transferase</keyword>
<organism>
    <name type="scientific">Methylobacterium radiotolerans (strain ATCC 27329 / DSM 1819 / JCM 2831 / NBRC 15690 / NCIMB 10815 / 0-1)</name>
    <dbReference type="NCBI Taxonomy" id="426355"/>
    <lineage>
        <taxon>Bacteria</taxon>
        <taxon>Pseudomonadati</taxon>
        <taxon>Pseudomonadota</taxon>
        <taxon>Alphaproteobacteria</taxon>
        <taxon>Hyphomicrobiales</taxon>
        <taxon>Methylobacteriaceae</taxon>
        <taxon>Methylobacterium</taxon>
    </lineage>
</organism>
<feature type="chain" id="PRO_1000203342" description="Phosphoglycerate kinase">
    <location>
        <begin position="1"/>
        <end position="400"/>
    </location>
</feature>
<feature type="binding site" evidence="1">
    <location>
        <begin position="23"/>
        <end position="25"/>
    </location>
    <ligand>
        <name>substrate</name>
    </ligand>
</feature>
<feature type="binding site" evidence="1">
    <location>
        <position position="38"/>
    </location>
    <ligand>
        <name>substrate</name>
    </ligand>
</feature>
<feature type="binding site" evidence="1">
    <location>
        <begin position="61"/>
        <end position="64"/>
    </location>
    <ligand>
        <name>substrate</name>
    </ligand>
</feature>
<feature type="binding site" evidence="1">
    <location>
        <position position="120"/>
    </location>
    <ligand>
        <name>substrate</name>
    </ligand>
</feature>
<feature type="binding site" evidence="1">
    <location>
        <position position="153"/>
    </location>
    <ligand>
        <name>substrate</name>
    </ligand>
</feature>
<feature type="binding site" evidence="1">
    <location>
        <position position="203"/>
    </location>
    <ligand>
        <name>ATP</name>
        <dbReference type="ChEBI" id="CHEBI:30616"/>
    </ligand>
</feature>
<feature type="binding site" evidence="1">
    <location>
        <position position="325"/>
    </location>
    <ligand>
        <name>ATP</name>
        <dbReference type="ChEBI" id="CHEBI:30616"/>
    </ligand>
</feature>
<feature type="binding site" evidence="1">
    <location>
        <begin position="355"/>
        <end position="358"/>
    </location>
    <ligand>
        <name>ATP</name>
        <dbReference type="ChEBI" id="CHEBI:30616"/>
    </ligand>
</feature>
<proteinExistence type="inferred from homology"/>
<evidence type="ECO:0000255" key="1">
    <source>
        <dbReference type="HAMAP-Rule" id="MF_00145"/>
    </source>
</evidence>